<feature type="chain" id="PRO_0000295480" description="Protein transport protein sec24">
    <location>
        <begin position="1"/>
        <end position="904"/>
    </location>
</feature>
<feature type="region of interest" description="Disordered" evidence="2">
    <location>
        <begin position="1"/>
        <end position="39"/>
    </location>
</feature>
<feature type="region of interest" description="Zinc finger-like">
    <location>
        <begin position="229"/>
        <end position="254"/>
    </location>
</feature>
<feature type="compositionally biased region" description="Low complexity" evidence="2">
    <location>
        <begin position="1"/>
        <end position="18"/>
    </location>
</feature>
<feature type="binding site" evidence="1">
    <location>
        <position position="229"/>
    </location>
    <ligand>
        <name>Zn(2+)</name>
        <dbReference type="ChEBI" id="CHEBI:29105"/>
    </ligand>
</feature>
<feature type="binding site" evidence="1">
    <location>
        <position position="232"/>
    </location>
    <ligand>
        <name>Zn(2+)</name>
        <dbReference type="ChEBI" id="CHEBI:29105"/>
    </ligand>
</feature>
<feature type="binding site" evidence="1">
    <location>
        <position position="251"/>
    </location>
    <ligand>
        <name>Zn(2+)</name>
        <dbReference type="ChEBI" id="CHEBI:29105"/>
    </ligand>
</feature>
<feature type="binding site" evidence="1">
    <location>
        <position position="254"/>
    </location>
    <ligand>
        <name>Zn(2+)</name>
        <dbReference type="ChEBI" id="CHEBI:29105"/>
    </ligand>
</feature>
<sequence length="904" mass="98953">MAAPQGGYPPQEGYGQPAAYGSPTQQQAPTPVQHGGKKKRAYAGEAFEFGSGANAALGGQLPAGGSYGAYPQQQAGYQQPAAYGADPAQAYAAPAAPGVAQMTQQFGAMGMTDPHLLPPQPAPQAPQAPRTVPLNQLYPTDLLSQPFNVAELDYPPPPIVLPPGTSVYPSPYANCPPKYVRSTLNAVPTTHSLLKKSKLPFALVIQPYAALHDSEDPIPVIPDQVISRCRRCRSYINPFVTFLDHGHRWRCNMCNLTNDVPQAFDWDTALQKPADRSLRPDLNHSVVEFVAPQEYMVRPPQPLVYLFLIDVSYASVTNGLLATSARCIKESLDRIPNADRRTRLGFIAVDSSLHYFSIPRDGSENSNPQMLVVSDLDEPFLPIPGDLLVTLSECRENIESFLDKLQEMFQNTQNNGCAMGSALRAGYKLIAPVGGKMTVLSSSLPNVGHGALTMREDKKVLGTSKESSLLQTANSFYKSFAVECSKAQVSVDMFLFSSQYQDVASLSNLPRYTGGQTYFYPGWNAARGEDAIKFAREFSDYLSSEIGLEAVLRVRATTGLRMNTFYGNFFNRSSDLCAFPAFPRDQAYVVEVAIDETITRPVVCLQTAVLHTTCNGERRIRVLTLALPTTQNLADVYASADQQAIATYFSHKAVERALGSGLEPAREALQSKIVELLATYRKELAGGSVSGGGLQFPANLRGLPVLFLAMIKNLGLRKSAQIPTDMRSAALCLLSTLPLPLLMQYIYPKMYSLHDMPDVAGLPDEKTGEIVLPPPVNLSSERVVPYGLYLIDDGQTQFLWVGRDAVPQLVLDVFGLPDKSQLRVGKQNLPDLDNDFNQRVRAVVEKSRDHRSKGVGSIVVPHLYVVKEDGEPGLRLWAQTMFVEDRADQSVSLVQWMGSLREKV</sequence>
<organism>
    <name type="scientific">Aspergillus terreus (strain NIH 2624 / FGSC A1156)</name>
    <dbReference type="NCBI Taxonomy" id="341663"/>
    <lineage>
        <taxon>Eukaryota</taxon>
        <taxon>Fungi</taxon>
        <taxon>Dikarya</taxon>
        <taxon>Ascomycota</taxon>
        <taxon>Pezizomycotina</taxon>
        <taxon>Eurotiomycetes</taxon>
        <taxon>Eurotiomycetidae</taxon>
        <taxon>Eurotiales</taxon>
        <taxon>Aspergillaceae</taxon>
        <taxon>Aspergillus</taxon>
        <taxon>Aspergillus subgen. Circumdati</taxon>
    </lineage>
</organism>
<proteinExistence type="inferred from homology"/>
<comment type="function">
    <text evidence="1">Component of the coat protein complex II (COPII) which promotes the formation of transport vesicles from the endoplasmic reticulum (ER). The coat has two main functions, the physical deformation of the endoplasmic reticulum membrane into vesicles and the selection of cargo molecules (By similarity).</text>
</comment>
<comment type="subunit">
    <text evidence="1">The COPII coat is composed of at least 5 proteins: the sec23/24 complex, the sec13/31 complex, and the protein sar1. Golgi apparatus membrane; Peripheral membrane protein; Cytoplasmic side.</text>
</comment>
<comment type="subcellular location">
    <subcellularLocation>
        <location evidence="1">Cytoplasm</location>
    </subcellularLocation>
    <subcellularLocation>
        <location evidence="1">Cytoplasmic vesicle</location>
        <location evidence="1">COPII-coated vesicle membrane</location>
        <topology evidence="1">Peripheral membrane protein</topology>
        <orientation evidence="1">Cytoplasmic side</orientation>
    </subcellularLocation>
    <subcellularLocation>
        <location evidence="1">Endoplasmic reticulum membrane</location>
        <topology evidence="1">Peripheral membrane protein</topology>
        <orientation evidence="1">Cytoplasmic side</orientation>
    </subcellularLocation>
    <subcellularLocation>
        <location evidence="1">Golgi apparatus membrane</location>
        <topology evidence="1">Peripheral membrane protein</topology>
        <orientation evidence="1">Cytoplasmic side</orientation>
    </subcellularLocation>
</comment>
<comment type="similarity">
    <text evidence="3">Belongs to the SEC23/SEC24 family. SEC24 subfamily.</text>
</comment>
<dbReference type="EMBL" id="CH476597">
    <property type="protein sequence ID" value="EAU36591.1"/>
    <property type="molecule type" value="Genomic_DNA"/>
</dbReference>
<dbReference type="RefSeq" id="XP_001212495.1">
    <property type="nucleotide sequence ID" value="XM_001212495.1"/>
</dbReference>
<dbReference type="SMR" id="Q0CSL7"/>
<dbReference type="STRING" id="341663.Q0CSL7"/>
<dbReference type="EnsemblFungi" id="EAU36591">
    <property type="protein sequence ID" value="EAU36591"/>
    <property type="gene ID" value="ATEG_03317"/>
</dbReference>
<dbReference type="GeneID" id="4318094"/>
<dbReference type="VEuPathDB" id="FungiDB:ATEG_03317"/>
<dbReference type="eggNOG" id="KOG1985">
    <property type="taxonomic scope" value="Eukaryota"/>
</dbReference>
<dbReference type="HOGENOM" id="CLU_004589_2_1_1"/>
<dbReference type="OMA" id="AVECSKQ"/>
<dbReference type="OrthoDB" id="49016at2759"/>
<dbReference type="Proteomes" id="UP000007963">
    <property type="component" value="Unassembled WGS sequence"/>
</dbReference>
<dbReference type="GO" id="GO:0005801">
    <property type="term" value="C:cis-Golgi network"/>
    <property type="evidence" value="ECO:0007669"/>
    <property type="project" value="EnsemblFungi"/>
</dbReference>
<dbReference type="GO" id="GO:0030127">
    <property type="term" value="C:COPII vesicle coat"/>
    <property type="evidence" value="ECO:0007669"/>
    <property type="project" value="InterPro"/>
</dbReference>
<dbReference type="GO" id="GO:0070971">
    <property type="term" value="C:endoplasmic reticulum exit site"/>
    <property type="evidence" value="ECO:0007669"/>
    <property type="project" value="EnsemblFungi"/>
</dbReference>
<dbReference type="GO" id="GO:0005789">
    <property type="term" value="C:endoplasmic reticulum membrane"/>
    <property type="evidence" value="ECO:0007669"/>
    <property type="project" value="UniProtKB-SubCell"/>
</dbReference>
<dbReference type="GO" id="GO:1990753">
    <property type="term" value="C:equatorial cell cortex"/>
    <property type="evidence" value="ECO:0007669"/>
    <property type="project" value="EnsemblFungi"/>
</dbReference>
<dbReference type="GO" id="GO:0000139">
    <property type="term" value="C:Golgi membrane"/>
    <property type="evidence" value="ECO:0007669"/>
    <property type="project" value="UniProtKB-SubCell"/>
</dbReference>
<dbReference type="GO" id="GO:0000149">
    <property type="term" value="F:SNARE binding"/>
    <property type="evidence" value="ECO:0007669"/>
    <property type="project" value="TreeGrafter"/>
</dbReference>
<dbReference type="GO" id="GO:0008270">
    <property type="term" value="F:zinc ion binding"/>
    <property type="evidence" value="ECO:0007669"/>
    <property type="project" value="InterPro"/>
</dbReference>
<dbReference type="GO" id="GO:0090110">
    <property type="term" value="P:COPII-coated vesicle cargo loading"/>
    <property type="evidence" value="ECO:0007669"/>
    <property type="project" value="TreeGrafter"/>
</dbReference>
<dbReference type="GO" id="GO:0006886">
    <property type="term" value="P:intracellular protein transport"/>
    <property type="evidence" value="ECO:0007669"/>
    <property type="project" value="InterPro"/>
</dbReference>
<dbReference type="CDD" id="cd01479">
    <property type="entry name" value="Sec24-like"/>
    <property type="match status" value="1"/>
</dbReference>
<dbReference type="Gene3D" id="2.60.40.1670">
    <property type="entry name" value="beta-sandwich domain of Sec23/24"/>
    <property type="match status" value="1"/>
</dbReference>
<dbReference type="Gene3D" id="1.20.120.730">
    <property type="entry name" value="Sec23/Sec24 helical domain"/>
    <property type="match status" value="1"/>
</dbReference>
<dbReference type="Gene3D" id="3.40.20.10">
    <property type="entry name" value="Severin"/>
    <property type="match status" value="1"/>
</dbReference>
<dbReference type="Gene3D" id="3.40.50.410">
    <property type="entry name" value="von Willebrand factor, type A domain"/>
    <property type="match status" value="1"/>
</dbReference>
<dbReference type="Gene3D" id="2.30.30.380">
    <property type="entry name" value="Zn-finger domain of Sec23/24"/>
    <property type="match status" value="1"/>
</dbReference>
<dbReference type="InterPro" id="IPR029006">
    <property type="entry name" value="ADF-H/Gelsolin-like_dom_sf"/>
</dbReference>
<dbReference type="InterPro" id="IPR007123">
    <property type="entry name" value="Gelsolin-like_dom"/>
</dbReference>
<dbReference type="InterPro" id="IPR036180">
    <property type="entry name" value="Gelsolin-like_dom_sf"/>
</dbReference>
<dbReference type="InterPro" id="IPR006900">
    <property type="entry name" value="Sec23/24_helical_dom"/>
</dbReference>
<dbReference type="InterPro" id="IPR036175">
    <property type="entry name" value="Sec23/24_helical_dom_sf"/>
</dbReference>
<dbReference type="InterPro" id="IPR006896">
    <property type="entry name" value="Sec23/24_trunk_dom"/>
</dbReference>
<dbReference type="InterPro" id="IPR012990">
    <property type="entry name" value="Sec23_24_beta_S"/>
</dbReference>
<dbReference type="InterPro" id="IPR050550">
    <property type="entry name" value="SEC23_SEC24_subfamily"/>
</dbReference>
<dbReference type="InterPro" id="IPR041742">
    <property type="entry name" value="Sec24-like_trunk_dom"/>
</dbReference>
<dbReference type="InterPro" id="IPR036465">
    <property type="entry name" value="vWFA_dom_sf"/>
</dbReference>
<dbReference type="InterPro" id="IPR006895">
    <property type="entry name" value="Znf_Sec23_Sec24"/>
</dbReference>
<dbReference type="InterPro" id="IPR036174">
    <property type="entry name" value="Znf_Sec23_Sec24_sf"/>
</dbReference>
<dbReference type="PANTHER" id="PTHR13803">
    <property type="entry name" value="SEC24-RELATED PROTEIN"/>
    <property type="match status" value="1"/>
</dbReference>
<dbReference type="PANTHER" id="PTHR13803:SF39">
    <property type="entry name" value="SECRETORY 24AB, ISOFORM A"/>
    <property type="match status" value="1"/>
</dbReference>
<dbReference type="Pfam" id="PF00626">
    <property type="entry name" value="Gelsolin"/>
    <property type="match status" value="1"/>
</dbReference>
<dbReference type="Pfam" id="PF08033">
    <property type="entry name" value="Sec23_BS"/>
    <property type="match status" value="1"/>
</dbReference>
<dbReference type="Pfam" id="PF04815">
    <property type="entry name" value="Sec23_helical"/>
    <property type="match status" value="1"/>
</dbReference>
<dbReference type="Pfam" id="PF04811">
    <property type="entry name" value="Sec23_trunk"/>
    <property type="match status" value="1"/>
</dbReference>
<dbReference type="Pfam" id="PF04810">
    <property type="entry name" value="zf-Sec23_Sec24"/>
    <property type="match status" value="1"/>
</dbReference>
<dbReference type="SUPFAM" id="SSF81995">
    <property type="entry name" value="beta-sandwich domain of Sec23/24"/>
    <property type="match status" value="1"/>
</dbReference>
<dbReference type="SUPFAM" id="SSF82754">
    <property type="entry name" value="C-terminal, gelsolin-like domain of Sec23/24"/>
    <property type="match status" value="1"/>
</dbReference>
<dbReference type="SUPFAM" id="SSF81811">
    <property type="entry name" value="Helical domain of Sec23/24"/>
    <property type="match status" value="1"/>
</dbReference>
<dbReference type="SUPFAM" id="SSF53300">
    <property type="entry name" value="vWA-like"/>
    <property type="match status" value="1"/>
</dbReference>
<dbReference type="SUPFAM" id="SSF82919">
    <property type="entry name" value="Zn-finger domain of Sec23/24"/>
    <property type="match status" value="1"/>
</dbReference>
<accession>Q0CSL7</accession>
<gene>
    <name type="primary">sec24</name>
    <name type="ORF">ATEG_03317</name>
</gene>
<name>SEC24_ASPTN</name>
<reference key="1">
    <citation type="submission" date="2005-09" db="EMBL/GenBank/DDBJ databases">
        <title>Annotation of the Aspergillus terreus NIH2624 genome.</title>
        <authorList>
            <person name="Birren B.W."/>
            <person name="Lander E.S."/>
            <person name="Galagan J.E."/>
            <person name="Nusbaum C."/>
            <person name="Devon K."/>
            <person name="Henn M."/>
            <person name="Ma L.-J."/>
            <person name="Jaffe D.B."/>
            <person name="Butler J."/>
            <person name="Alvarez P."/>
            <person name="Gnerre S."/>
            <person name="Grabherr M."/>
            <person name="Kleber M."/>
            <person name="Mauceli E.W."/>
            <person name="Brockman W."/>
            <person name="Rounsley S."/>
            <person name="Young S.K."/>
            <person name="LaButti K."/>
            <person name="Pushparaj V."/>
            <person name="DeCaprio D."/>
            <person name="Crawford M."/>
            <person name="Koehrsen M."/>
            <person name="Engels R."/>
            <person name="Montgomery P."/>
            <person name="Pearson M."/>
            <person name="Howarth C."/>
            <person name="Larson L."/>
            <person name="Luoma S."/>
            <person name="White J."/>
            <person name="Alvarado L."/>
            <person name="Kodira C.D."/>
            <person name="Zeng Q."/>
            <person name="Oleary S."/>
            <person name="Yandava C."/>
            <person name="Denning D.W."/>
            <person name="Nierman W.C."/>
            <person name="Milne T."/>
            <person name="Madden K."/>
        </authorList>
    </citation>
    <scope>NUCLEOTIDE SEQUENCE [LARGE SCALE GENOMIC DNA]</scope>
    <source>
        <strain>NIH 2624 / FGSC A1156</strain>
    </source>
</reference>
<keyword id="KW-0963">Cytoplasm</keyword>
<keyword id="KW-0968">Cytoplasmic vesicle</keyword>
<keyword id="KW-0256">Endoplasmic reticulum</keyword>
<keyword id="KW-0931">ER-Golgi transport</keyword>
<keyword id="KW-0333">Golgi apparatus</keyword>
<keyword id="KW-0472">Membrane</keyword>
<keyword id="KW-0479">Metal-binding</keyword>
<keyword id="KW-0653">Protein transport</keyword>
<keyword id="KW-1185">Reference proteome</keyword>
<keyword id="KW-0813">Transport</keyword>
<keyword id="KW-0862">Zinc</keyword>
<evidence type="ECO:0000250" key="1"/>
<evidence type="ECO:0000256" key="2">
    <source>
        <dbReference type="SAM" id="MobiDB-lite"/>
    </source>
</evidence>
<evidence type="ECO:0000305" key="3"/>
<protein>
    <recommendedName>
        <fullName>Protein transport protein sec24</fullName>
    </recommendedName>
</protein>